<accession>Q9FZ19</accession>
<proteinExistence type="inferred from homology"/>
<dbReference type="EMBL" id="AC064879">
    <property type="protein sequence ID" value="AAG00894.1"/>
    <property type="status" value="ALT_INIT"/>
    <property type="molecule type" value="Genomic_DNA"/>
</dbReference>
<dbReference type="EMBL" id="CP002684">
    <property type="protein sequence ID" value="AEE27428.1"/>
    <property type="molecule type" value="Genomic_DNA"/>
</dbReference>
<dbReference type="PIR" id="F86154">
    <property type="entry name" value="F86154"/>
</dbReference>
<dbReference type="RefSeq" id="NP_171744.1">
    <property type="nucleotide sequence ID" value="NM_100123.2"/>
</dbReference>
<dbReference type="SMR" id="Q9FZ19"/>
<dbReference type="FunCoup" id="Q9FZ19">
    <property type="interactions" value="162"/>
</dbReference>
<dbReference type="PaxDb" id="3702-AT1G02420.1"/>
<dbReference type="ProteomicsDB" id="226466"/>
<dbReference type="EnsemblPlants" id="AT1G02420.1">
    <property type="protein sequence ID" value="AT1G02420.1"/>
    <property type="gene ID" value="AT1G02420"/>
</dbReference>
<dbReference type="GeneID" id="837779"/>
<dbReference type="Gramene" id="AT1G02420.1">
    <property type="protein sequence ID" value="AT1G02420.1"/>
    <property type="gene ID" value="AT1G02420"/>
</dbReference>
<dbReference type="KEGG" id="ath:AT1G02420"/>
<dbReference type="Araport" id="AT1G02420"/>
<dbReference type="TAIR" id="AT1G02420"/>
<dbReference type="eggNOG" id="KOG4197">
    <property type="taxonomic scope" value="Eukaryota"/>
</dbReference>
<dbReference type="HOGENOM" id="CLU_002706_49_20_1"/>
<dbReference type="InParanoid" id="Q9FZ19"/>
<dbReference type="OMA" id="CQEKSMT"/>
<dbReference type="PhylomeDB" id="Q9FZ19"/>
<dbReference type="PRO" id="PR:Q9FZ19"/>
<dbReference type="Proteomes" id="UP000006548">
    <property type="component" value="Chromosome 1"/>
</dbReference>
<dbReference type="ExpressionAtlas" id="Q9FZ19">
    <property type="expression patterns" value="baseline and differential"/>
</dbReference>
<dbReference type="Gene3D" id="1.25.40.10">
    <property type="entry name" value="Tetratricopeptide repeat domain"/>
    <property type="match status" value="3"/>
</dbReference>
<dbReference type="InterPro" id="IPR002885">
    <property type="entry name" value="Pentatricopeptide_rpt"/>
</dbReference>
<dbReference type="InterPro" id="IPR011990">
    <property type="entry name" value="TPR-like_helical_dom_sf"/>
</dbReference>
<dbReference type="NCBIfam" id="TIGR00756">
    <property type="entry name" value="PPR"/>
    <property type="match status" value="4"/>
</dbReference>
<dbReference type="PANTHER" id="PTHR47447">
    <property type="entry name" value="OS03G0856100 PROTEIN"/>
    <property type="match status" value="1"/>
</dbReference>
<dbReference type="PANTHER" id="PTHR47447:SF17">
    <property type="entry name" value="OS12G0638900 PROTEIN"/>
    <property type="match status" value="1"/>
</dbReference>
<dbReference type="Pfam" id="PF01535">
    <property type="entry name" value="PPR"/>
    <property type="match status" value="3"/>
</dbReference>
<dbReference type="Pfam" id="PF13041">
    <property type="entry name" value="PPR_2"/>
    <property type="match status" value="2"/>
</dbReference>
<dbReference type="PROSITE" id="PS51375">
    <property type="entry name" value="PPR"/>
    <property type="match status" value="9"/>
</dbReference>
<evidence type="ECO:0000305" key="1"/>
<reference key="1">
    <citation type="journal article" date="2000" name="Nature">
        <title>Sequence and analysis of chromosome 1 of the plant Arabidopsis thaliana.</title>
        <authorList>
            <person name="Theologis A."/>
            <person name="Ecker J.R."/>
            <person name="Palm C.J."/>
            <person name="Federspiel N.A."/>
            <person name="Kaul S."/>
            <person name="White O."/>
            <person name="Alonso J."/>
            <person name="Altafi H."/>
            <person name="Araujo R."/>
            <person name="Bowman C.L."/>
            <person name="Brooks S.Y."/>
            <person name="Buehler E."/>
            <person name="Chan A."/>
            <person name="Chao Q."/>
            <person name="Chen H."/>
            <person name="Cheuk R.F."/>
            <person name="Chin C.W."/>
            <person name="Chung M.K."/>
            <person name="Conn L."/>
            <person name="Conway A.B."/>
            <person name="Conway A.R."/>
            <person name="Creasy T.H."/>
            <person name="Dewar K."/>
            <person name="Dunn P."/>
            <person name="Etgu P."/>
            <person name="Feldblyum T.V."/>
            <person name="Feng J.-D."/>
            <person name="Fong B."/>
            <person name="Fujii C.Y."/>
            <person name="Gill J.E."/>
            <person name="Goldsmith A.D."/>
            <person name="Haas B."/>
            <person name="Hansen N.F."/>
            <person name="Hughes B."/>
            <person name="Huizar L."/>
            <person name="Hunter J.L."/>
            <person name="Jenkins J."/>
            <person name="Johnson-Hopson C."/>
            <person name="Khan S."/>
            <person name="Khaykin E."/>
            <person name="Kim C.J."/>
            <person name="Koo H.L."/>
            <person name="Kremenetskaia I."/>
            <person name="Kurtz D.B."/>
            <person name="Kwan A."/>
            <person name="Lam B."/>
            <person name="Langin-Hooper S."/>
            <person name="Lee A."/>
            <person name="Lee J.M."/>
            <person name="Lenz C.A."/>
            <person name="Li J.H."/>
            <person name="Li Y.-P."/>
            <person name="Lin X."/>
            <person name="Liu S.X."/>
            <person name="Liu Z.A."/>
            <person name="Luros J.S."/>
            <person name="Maiti R."/>
            <person name="Marziali A."/>
            <person name="Militscher J."/>
            <person name="Miranda M."/>
            <person name="Nguyen M."/>
            <person name="Nierman W.C."/>
            <person name="Osborne B.I."/>
            <person name="Pai G."/>
            <person name="Peterson J."/>
            <person name="Pham P.K."/>
            <person name="Rizzo M."/>
            <person name="Rooney T."/>
            <person name="Rowley D."/>
            <person name="Sakano H."/>
            <person name="Salzberg S.L."/>
            <person name="Schwartz J.R."/>
            <person name="Shinn P."/>
            <person name="Southwick A.M."/>
            <person name="Sun H."/>
            <person name="Tallon L.J."/>
            <person name="Tambunga G."/>
            <person name="Toriumi M.J."/>
            <person name="Town C.D."/>
            <person name="Utterback T."/>
            <person name="Van Aken S."/>
            <person name="Vaysberg M."/>
            <person name="Vysotskaia V.S."/>
            <person name="Walker M."/>
            <person name="Wu D."/>
            <person name="Yu G."/>
            <person name="Fraser C.M."/>
            <person name="Venter J.C."/>
            <person name="Davis R.W."/>
        </authorList>
    </citation>
    <scope>NUCLEOTIDE SEQUENCE [LARGE SCALE GENOMIC DNA]</scope>
    <source>
        <strain>cv. Columbia</strain>
    </source>
</reference>
<reference key="2">
    <citation type="journal article" date="2017" name="Plant J.">
        <title>Araport11: a complete reannotation of the Arabidopsis thaliana reference genome.</title>
        <authorList>
            <person name="Cheng C.Y."/>
            <person name="Krishnakumar V."/>
            <person name="Chan A.P."/>
            <person name="Thibaud-Nissen F."/>
            <person name="Schobel S."/>
            <person name="Town C.D."/>
        </authorList>
    </citation>
    <scope>GENOME REANNOTATION</scope>
    <source>
        <strain>cv. Columbia</strain>
    </source>
</reference>
<reference key="3">
    <citation type="journal article" date="2004" name="Plant Cell">
        <title>Genome-wide analysis of Arabidopsis pentatricopeptide repeat proteins reveals their essential role in organelle biogenesis.</title>
        <authorList>
            <person name="Lurin C."/>
            <person name="Andres C."/>
            <person name="Aubourg S."/>
            <person name="Bellaoui M."/>
            <person name="Bitton F."/>
            <person name="Bruyere C."/>
            <person name="Caboche M."/>
            <person name="Debast C."/>
            <person name="Gualberto J."/>
            <person name="Hoffmann B."/>
            <person name="Lecharny A."/>
            <person name="Le Ret M."/>
            <person name="Martin-Magniette M.-L."/>
            <person name="Mireau H."/>
            <person name="Peeters N."/>
            <person name="Renou J.-P."/>
            <person name="Szurek B."/>
            <person name="Taconnat L."/>
            <person name="Small I."/>
        </authorList>
    </citation>
    <scope>GENE FAMILY</scope>
</reference>
<comment type="similarity">
    <text evidence="1">Belongs to the PPR family. P subfamily.</text>
</comment>
<comment type="sequence caution" evidence="1">
    <conflict type="erroneous initiation">
        <sequence resource="EMBL-CDS" id="AAG00894"/>
    </conflict>
</comment>
<comment type="online information" name="Pentatricopeptide repeat proteins">
    <link uri="https://ppr.plantenergy.uwa.edu.au"/>
</comment>
<sequence length="491" mass="56557">MMMILKPLSSHHVSNFRLSVSFLHSVALSDAKVPVEEEGDDAETVFRMINGSNLQVELKESLSSSGIHLSKDLIDRVLKRVRFSHGNPIQTLEFYRYASAIRGFYHSSFSLDTMLYILGRNRKFDQIWELLIETKRKDRSLISPRTMQVVLGRVAKLCSVRQTVESFWKFKRLVPDFFDTACFNALLRTLCQEKSMTDARNVYHSLKHQFQPDLQTFNILLSGWKSSEEAEAFFEEMKGKGLKPDVVTYNSLIDVYCKDREIEKAYKLIDKMREEEETPDVITYTTVIGGLGLIGQPDKAREVLKEMKEYGCYPDVAAYNAAIRNFCIARRLGDADKLVDEMVKKGLSPNATTYNLFFRVLSLANDLGRSWELYVRMLGNECLPNTQSCMFLIKMFKRHEKVDMAMRLWEDMVVKGFGSYSLVSDVLLDLLCDLAKVEEAEKCLLEMVEKGHRPSNVSFKRIKLLMELANKHDEVNNLIQKMAIFSTEIPR</sequence>
<gene>
    <name type="ordered locus">At1g02420</name>
    <name type="ORF">T6A9.11</name>
</gene>
<organism>
    <name type="scientific">Arabidopsis thaliana</name>
    <name type="common">Mouse-ear cress</name>
    <dbReference type="NCBI Taxonomy" id="3702"/>
    <lineage>
        <taxon>Eukaryota</taxon>
        <taxon>Viridiplantae</taxon>
        <taxon>Streptophyta</taxon>
        <taxon>Embryophyta</taxon>
        <taxon>Tracheophyta</taxon>
        <taxon>Spermatophyta</taxon>
        <taxon>Magnoliopsida</taxon>
        <taxon>eudicotyledons</taxon>
        <taxon>Gunneridae</taxon>
        <taxon>Pentapetalae</taxon>
        <taxon>rosids</taxon>
        <taxon>malvids</taxon>
        <taxon>Brassicales</taxon>
        <taxon>Brassicaceae</taxon>
        <taxon>Camelineae</taxon>
        <taxon>Arabidopsis</taxon>
    </lineage>
</organism>
<feature type="chain" id="PRO_0000342746" description="Putative pentatricopeptide repeat-containing protein At1g02420">
    <location>
        <begin position="1"/>
        <end position="491"/>
    </location>
</feature>
<feature type="repeat" description="PPR 1">
    <location>
        <begin position="179"/>
        <end position="209"/>
    </location>
</feature>
<feature type="repeat" description="PPR 2">
    <location>
        <begin position="210"/>
        <end position="244"/>
    </location>
</feature>
<feature type="repeat" description="PPR 3">
    <location>
        <begin position="245"/>
        <end position="279"/>
    </location>
</feature>
<feature type="repeat" description="PPR 4">
    <location>
        <begin position="280"/>
        <end position="314"/>
    </location>
</feature>
<feature type="repeat" description="PPR 5">
    <location>
        <begin position="315"/>
        <end position="349"/>
    </location>
</feature>
<feature type="repeat" description="PPR 6">
    <location>
        <begin position="350"/>
        <end position="384"/>
    </location>
</feature>
<feature type="repeat" description="PPR 7">
    <location>
        <begin position="385"/>
        <end position="419"/>
    </location>
</feature>
<feature type="repeat" description="PPR 8">
    <location>
        <begin position="420"/>
        <end position="454"/>
    </location>
</feature>
<keyword id="KW-1185">Reference proteome</keyword>
<keyword id="KW-0677">Repeat</keyword>
<protein>
    <recommendedName>
        <fullName>Putative pentatricopeptide repeat-containing protein At1g02420</fullName>
    </recommendedName>
</protein>
<name>PPR5_ARATH</name>